<name>HSF_CRYNJ</name>
<sequence>MTTNLYAIAGPSKPTTPTSTPSPRSEPPSPLKSLTSLPTNPLNSHGTSTPNTLTNQLSSTGIGISKPGLSVDENGEVMKVPAFLNKLYTMVSDPEVDDLIYWGESGDSFFVPNAELFGRELLPRWFKHSNFSSFVRQLNMYGFHKVPHLQSGALKNETPIELWEFANPYFKRGQPQLLTKVTRKNNRPSNSGVGPSSSVGGSGAGGGMSTRSASAAAASGSASGQIQQAISQGHEAGNHSTSGKYLITDGTTPGSVPPSHTSAGPLIAPQTLDLSAINSGIAAIRQTQASIATDLRKLQASNEALWRQAYETQEKQRKHEETIDLIVSFLERLFGTEGEGLKGLKEAMRRGVGVRRDRDGREGRDSRDSRFAEDDDGGQKKRRRVGIDRMIEGGTGDGTGEHGEIESPTSDDRLVEIGSNSEYSIPSVKRTSSSSHPISLGQLGSSRFTALPSEDPSPSASGPGSTSYEGLHTTQTNARGAGADVNVTDPTLGMNHLSPLSDTDPLLPSSSNALAPYSSHLPFPSSNSNQSNSFNPSNPSSAWASNPSQPLLSPTSAAAAAHAYNLDPSLLQTTIGSLLQSPAAAQMFLNSLSASAQGQALASHSHPHNPSPLNPNPNGNASTSASASAHGMNTGGMGTGSGTKDVDPTLALFSPLPSHSSLTSQSNDLLKSYSDALTVGEGVDNLQESIDSLVRSMGLDLPNGGSSVGVDVGDGAGVGTETGEGDGEFNVDEFLQGLAKEGEEEGEREVEGDGGVSSSGAGAGAENGRKEDVIAQSGLKSES</sequence>
<feature type="chain" id="PRO_0000452016" description="Heat shock transcription factor">
    <location>
        <begin position="1"/>
        <end position="783"/>
    </location>
</feature>
<feature type="DNA-binding region" evidence="1">
    <location>
        <begin position="78"/>
        <end position="168"/>
    </location>
</feature>
<feature type="region of interest" description="Disordered" evidence="4">
    <location>
        <begin position="1"/>
        <end position="59"/>
    </location>
</feature>
<feature type="region of interest" description="Disordered" evidence="4">
    <location>
        <begin position="181"/>
        <end position="262"/>
    </location>
</feature>
<feature type="region of interest" description="Involved in trimerization" evidence="2">
    <location>
        <begin position="280"/>
        <end position="333"/>
    </location>
</feature>
<feature type="region of interest" description="Disordered" evidence="4">
    <location>
        <begin position="350"/>
        <end position="554"/>
    </location>
</feature>
<feature type="region of interest" description="Disordered" evidence="4">
    <location>
        <begin position="599"/>
        <end position="652"/>
    </location>
</feature>
<feature type="region of interest" description="Disordered" evidence="4">
    <location>
        <begin position="736"/>
        <end position="783"/>
    </location>
</feature>
<feature type="compositionally biased region" description="Low complexity" evidence="4">
    <location>
        <begin position="11"/>
        <end position="23"/>
    </location>
</feature>
<feature type="compositionally biased region" description="Low complexity" evidence="4">
    <location>
        <begin position="31"/>
        <end position="42"/>
    </location>
</feature>
<feature type="compositionally biased region" description="Polar residues" evidence="4">
    <location>
        <begin position="43"/>
        <end position="59"/>
    </location>
</feature>
<feature type="compositionally biased region" description="Low complexity" evidence="4">
    <location>
        <begin position="189"/>
        <end position="199"/>
    </location>
</feature>
<feature type="compositionally biased region" description="Low complexity" evidence="4">
    <location>
        <begin position="209"/>
        <end position="233"/>
    </location>
</feature>
<feature type="compositionally biased region" description="Polar residues" evidence="4">
    <location>
        <begin position="238"/>
        <end position="262"/>
    </location>
</feature>
<feature type="compositionally biased region" description="Basic and acidic residues" evidence="4">
    <location>
        <begin position="350"/>
        <end position="372"/>
    </location>
</feature>
<feature type="compositionally biased region" description="Basic and acidic residues" evidence="4">
    <location>
        <begin position="399"/>
        <end position="415"/>
    </location>
</feature>
<feature type="compositionally biased region" description="Polar residues" evidence="4">
    <location>
        <begin position="418"/>
        <end position="448"/>
    </location>
</feature>
<feature type="compositionally biased region" description="Low complexity" evidence="4">
    <location>
        <begin position="452"/>
        <end position="467"/>
    </location>
</feature>
<feature type="compositionally biased region" description="Low complexity" evidence="4">
    <location>
        <begin position="497"/>
        <end position="511"/>
    </location>
</feature>
<feature type="compositionally biased region" description="Low complexity" evidence="4">
    <location>
        <begin position="522"/>
        <end position="550"/>
    </location>
</feature>
<feature type="compositionally biased region" description="Low complexity" evidence="4">
    <location>
        <begin position="616"/>
        <end position="632"/>
    </location>
</feature>
<feature type="compositionally biased region" description="Acidic residues" evidence="4">
    <location>
        <begin position="742"/>
        <end position="752"/>
    </location>
</feature>
<feature type="compositionally biased region" description="Gly residues" evidence="4">
    <location>
        <begin position="753"/>
        <end position="765"/>
    </location>
</feature>
<dbReference type="EMBL" id="AE017342">
    <property type="protein sequence ID" value="AAW41451.1"/>
    <property type="molecule type" value="Genomic_DNA"/>
</dbReference>
<dbReference type="RefSeq" id="XP_568758.1">
    <property type="nucleotide sequence ID" value="XM_568758.1"/>
</dbReference>
<dbReference type="SMR" id="Q5KMX8"/>
<dbReference type="STRING" id="214684.Q5KMX8"/>
<dbReference type="PaxDb" id="214684-Q5KMX8"/>
<dbReference type="EnsemblFungi" id="AAW41451">
    <property type="protein sequence ID" value="AAW41451"/>
    <property type="gene ID" value="CNB00120"/>
</dbReference>
<dbReference type="GeneID" id="3255945"/>
<dbReference type="KEGG" id="cne:CNB00120"/>
<dbReference type="VEuPathDB" id="FungiDB:CNB00120"/>
<dbReference type="eggNOG" id="KOG0627">
    <property type="taxonomic scope" value="Eukaryota"/>
</dbReference>
<dbReference type="HOGENOM" id="CLU_015858_1_0_1"/>
<dbReference type="InParanoid" id="Q5KMX8"/>
<dbReference type="OMA" id="RMDHDNE"/>
<dbReference type="OrthoDB" id="60033at2759"/>
<dbReference type="Proteomes" id="UP000002149">
    <property type="component" value="Chromosome 2"/>
</dbReference>
<dbReference type="GO" id="GO:0005634">
    <property type="term" value="C:nucleus"/>
    <property type="evidence" value="ECO:0000305"/>
    <property type="project" value="UniProtKB"/>
</dbReference>
<dbReference type="GO" id="GO:0003700">
    <property type="term" value="F:DNA-binding transcription factor activity"/>
    <property type="evidence" value="ECO:0000314"/>
    <property type="project" value="UniProtKB"/>
</dbReference>
<dbReference type="GO" id="GO:0043565">
    <property type="term" value="F:sequence-specific DNA binding"/>
    <property type="evidence" value="ECO:0000314"/>
    <property type="project" value="UniProtKB"/>
</dbReference>
<dbReference type="FunFam" id="1.10.10.10:FF:000027">
    <property type="entry name" value="Heat shock transcription factor 1"/>
    <property type="match status" value="1"/>
</dbReference>
<dbReference type="Gene3D" id="1.10.10.10">
    <property type="entry name" value="Winged helix-like DNA-binding domain superfamily/Winged helix DNA-binding domain"/>
    <property type="match status" value="1"/>
</dbReference>
<dbReference type="InterPro" id="IPR000232">
    <property type="entry name" value="HSF_DNA-bd"/>
</dbReference>
<dbReference type="InterPro" id="IPR036388">
    <property type="entry name" value="WH-like_DNA-bd_sf"/>
</dbReference>
<dbReference type="InterPro" id="IPR036390">
    <property type="entry name" value="WH_DNA-bd_sf"/>
</dbReference>
<dbReference type="PANTHER" id="PTHR10015:SF427">
    <property type="entry name" value="HEAT SHOCK FACTOR PROTEIN"/>
    <property type="match status" value="1"/>
</dbReference>
<dbReference type="PANTHER" id="PTHR10015">
    <property type="entry name" value="HEAT SHOCK TRANSCRIPTION FACTOR"/>
    <property type="match status" value="1"/>
</dbReference>
<dbReference type="Pfam" id="PF00447">
    <property type="entry name" value="HSF_DNA-bind"/>
    <property type="match status" value="1"/>
</dbReference>
<dbReference type="PRINTS" id="PR00056">
    <property type="entry name" value="HSFDOMAIN"/>
</dbReference>
<dbReference type="SMART" id="SM00415">
    <property type="entry name" value="HSF"/>
    <property type="match status" value="1"/>
</dbReference>
<dbReference type="SUPFAM" id="SSF46785">
    <property type="entry name" value="Winged helix' DNA-binding domain"/>
    <property type="match status" value="1"/>
</dbReference>
<dbReference type="PROSITE" id="PS00434">
    <property type="entry name" value="HSF_DOMAIN"/>
    <property type="match status" value="1"/>
</dbReference>
<keyword id="KW-0010">Activator</keyword>
<keyword id="KW-0238">DNA-binding</keyword>
<keyword id="KW-0539">Nucleus</keyword>
<keyword id="KW-1185">Reference proteome</keyword>
<keyword id="KW-0346">Stress response</keyword>
<keyword id="KW-0804">Transcription</keyword>
<keyword id="KW-0805">Transcription regulation</keyword>
<reference evidence="9" key="1">
    <citation type="journal article" date="2005" name="Science">
        <title>The genome of the basidiomycetous yeast and human pathogen Cryptococcus neoformans.</title>
        <authorList>
            <person name="Loftus B.J."/>
            <person name="Fung E."/>
            <person name="Roncaglia P."/>
            <person name="Rowley D."/>
            <person name="Amedeo P."/>
            <person name="Bruno D."/>
            <person name="Vamathevan J."/>
            <person name="Miranda M."/>
            <person name="Anderson I.J."/>
            <person name="Fraser J.A."/>
            <person name="Allen J.E."/>
            <person name="Bosdet I.E."/>
            <person name="Brent M.R."/>
            <person name="Chiu R."/>
            <person name="Doering T.L."/>
            <person name="Donlin M.J."/>
            <person name="D'Souza C.A."/>
            <person name="Fox D.S."/>
            <person name="Grinberg V."/>
            <person name="Fu J."/>
            <person name="Fukushima M."/>
            <person name="Haas B.J."/>
            <person name="Huang J.C."/>
            <person name="Janbon G."/>
            <person name="Jones S.J.M."/>
            <person name="Koo H.L."/>
            <person name="Krzywinski M.I."/>
            <person name="Kwon-Chung K.J."/>
            <person name="Lengeler K.B."/>
            <person name="Maiti R."/>
            <person name="Marra M.A."/>
            <person name="Marra R.E."/>
            <person name="Mathewson C.A."/>
            <person name="Mitchell T.G."/>
            <person name="Pertea M."/>
            <person name="Riggs F.R."/>
            <person name="Salzberg S.L."/>
            <person name="Schein J.E."/>
            <person name="Shvartsbeyn A."/>
            <person name="Shin H."/>
            <person name="Shumway M."/>
            <person name="Specht C.A."/>
            <person name="Suh B.B."/>
            <person name="Tenney A."/>
            <person name="Utterback T.R."/>
            <person name="Wickes B.L."/>
            <person name="Wortman J.R."/>
            <person name="Wye N.H."/>
            <person name="Kronstad J.W."/>
            <person name="Lodge J.K."/>
            <person name="Heitman J."/>
            <person name="Davis R.W."/>
            <person name="Fraser C.M."/>
            <person name="Hyman R.W."/>
        </authorList>
    </citation>
    <scope>NUCLEOTIDE SEQUENCE [LARGE SCALE GENOMIC DNA]</scope>
    <source>
        <strain evidence="9">JEC21 / ATCC MYA-565</strain>
    </source>
</reference>
<reference evidence="7" key="2">
    <citation type="journal article" date="2006" name="Mol. Microbiol.">
        <title>The Hsp70 member, Ssa1, acts as a DNA-binding transcriptional co-activator of laccase in Cryptococcus neoformans.</title>
        <authorList>
            <person name="Zhang S."/>
            <person name="Hacham M."/>
            <person name="Panepinto J."/>
            <person name="Hu G."/>
            <person name="Shin S."/>
            <person name="Zhu X."/>
            <person name="Williamson P.R."/>
        </authorList>
    </citation>
    <scope>FUNCTION</scope>
    <scope>INTERACTION WITH SSA1</scope>
    <scope>SUBCELLULAR LOCATION</scope>
</reference>
<evidence type="ECO:0000250" key="1">
    <source>
        <dbReference type="UniProtKB" id="P10961"/>
    </source>
</evidence>
<evidence type="ECO:0000250" key="2">
    <source>
        <dbReference type="UniProtKB" id="P22121"/>
    </source>
</evidence>
<evidence type="ECO:0000255" key="3">
    <source>
        <dbReference type="RuleBase" id="RU004020"/>
    </source>
</evidence>
<evidence type="ECO:0000256" key="4">
    <source>
        <dbReference type="SAM" id="MobiDB-lite"/>
    </source>
</evidence>
<evidence type="ECO:0000269" key="5">
    <source>
    </source>
</evidence>
<evidence type="ECO:0000303" key="6">
    <source>
    </source>
</evidence>
<evidence type="ECO:0000305" key="7"/>
<evidence type="ECO:0000312" key="8">
    <source>
        <dbReference type="EMBL" id="AAW41451.1"/>
    </source>
</evidence>
<evidence type="ECO:0000312" key="9">
    <source>
        <dbReference type="Proteomes" id="UP000002149"/>
    </source>
</evidence>
<organism evidence="9">
    <name type="scientific">Cryptococcus neoformans var. neoformans serotype D (strain JEC21 / ATCC MYA-565)</name>
    <name type="common">Filobasidiella neoformans</name>
    <dbReference type="NCBI Taxonomy" id="214684"/>
    <lineage>
        <taxon>Eukaryota</taxon>
        <taxon>Fungi</taxon>
        <taxon>Dikarya</taxon>
        <taxon>Basidiomycota</taxon>
        <taxon>Agaricomycotina</taxon>
        <taxon>Tremellomycetes</taxon>
        <taxon>Tremellales</taxon>
        <taxon>Cryptococcaceae</taxon>
        <taxon>Cryptococcus</taxon>
        <taxon>Cryptococcus neoformans species complex</taxon>
    </lineage>
</organism>
<proteinExistence type="evidence at protein level"/>
<gene>
    <name evidence="6" type="primary">HSF1</name>
    <name evidence="8" type="ordered locus">CNB00120</name>
</gene>
<accession>Q5KMX8</accession>
<accession>Q55X04</accession>
<comment type="function">
    <text evidence="5">DNA-binding transcription factor that specifically binds heat shock promoter elements (HSE) and activates transcription (PubMed:17040492). Together with its coregulator SSA1, activates expression of laccase LAC1 during glucose starvation (PubMed:17040492).</text>
</comment>
<comment type="subunit">
    <text evidence="1 5">Homotrimer (By similarity). Homotrimerization increases the affinity of HSF1 to DNA (By similarity). Interacts with transcriptional coregulator SSA1 on chromatin (PubMed:17040492).</text>
</comment>
<comment type="subcellular location">
    <subcellularLocation>
        <location evidence="5">Nucleus</location>
    </subcellularLocation>
</comment>
<comment type="similarity">
    <text evidence="3">Belongs to the HSF family.</text>
</comment>
<protein>
    <recommendedName>
        <fullName evidence="6">Heat shock transcription factor</fullName>
        <shortName evidence="7">HSTF</shortName>
    </recommendedName>
    <alternativeName>
        <fullName evidence="7">Heat shock factor protein</fullName>
        <shortName evidence="7">HSF</shortName>
    </alternativeName>
</protein>